<comment type="subcellular location">
    <subcellularLocation>
        <location evidence="3">Membrane</location>
        <topology evidence="3">Single-pass membrane protein</topology>
    </subcellularLocation>
</comment>
<feature type="chain" id="PRO_0000247113" description="Putative uncharacterized protein YLR173W">
    <location>
        <begin position="1"/>
        <end position="608"/>
    </location>
</feature>
<feature type="transmembrane region" description="Helical" evidence="1">
    <location>
        <begin position="55"/>
        <end position="75"/>
    </location>
</feature>
<feature type="region of interest" description="Disordered" evidence="2">
    <location>
        <begin position="1"/>
        <end position="21"/>
    </location>
</feature>
<feature type="modified residue" description="Phosphothreonine" evidence="4">
    <location>
        <position position="24"/>
    </location>
</feature>
<feature type="modified residue" description="Phosphoserine" evidence="4">
    <location>
        <position position="27"/>
    </location>
</feature>
<feature type="glycosylation site" description="N-linked (GlcNAc...) asparagine" evidence="1">
    <location>
        <position position="115"/>
    </location>
</feature>
<feature type="glycosylation site" description="N-linked (GlcNAc...) asparagine" evidence="1">
    <location>
        <position position="141"/>
    </location>
</feature>
<feature type="glycosylation site" description="N-linked (GlcNAc...) asparagine" evidence="1">
    <location>
        <position position="169"/>
    </location>
</feature>
<feature type="glycosylation site" description="N-linked (GlcNAc...) asparagine" evidence="1">
    <location>
        <position position="407"/>
    </location>
</feature>
<feature type="glycosylation site" description="N-linked (GlcNAc...) asparagine" evidence="1">
    <location>
        <position position="425"/>
    </location>
</feature>
<feature type="glycosylation site" description="N-linked (GlcNAc...) asparagine" evidence="1">
    <location>
        <position position="449"/>
    </location>
</feature>
<feature type="glycosylation site" description="N-linked (GlcNAc...) asparagine" evidence="1">
    <location>
        <position position="453"/>
    </location>
</feature>
<feature type="glycosylation site" description="N-linked (GlcNAc...) asparagine" evidence="1">
    <location>
        <position position="527"/>
    </location>
</feature>
<feature type="glycosylation site" description="N-linked (GlcNAc...) asparagine" evidence="1">
    <location>
        <position position="580"/>
    </location>
</feature>
<gene>
    <name type="ordered locus">YLR173W</name>
</gene>
<name>YL173_YEAST</name>
<reference key="1">
    <citation type="journal article" date="1997" name="Nature">
        <title>The nucleotide sequence of Saccharomyces cerevisiae chromosome XII.</title>
        <authorList>
            <person name="Johnston M."/>
            <person name="Hillier L.W."/>
            <person name="Riles L."/>
            <person name="Albermann K."/>
            <person name="Andre B."/>
            <person name="Ansorge W."/>
            <person name="Benes V."/>
            <person name="Brueckner M."/>
            <person name="Delius H."/>
            <person name="Dubois E."/>
            <person name="Duesterhoeft A."/>
            <person name="Entian K.-D."/>
            <person name="Floeth M."/>
            <person name="Goffeau A."/>
            <person name="Hebling U."/>
            <person name="Heumann K."/>
            <person name="Heuss-Neitzel D."/>
            <person name="Hilbert H."/>
            <person name="Hilger F."/>
            <person name="Kleine K."/>
            <person name="Koetter P."/>
            <person name="Louis E.J."/>
            <person name="Messenguy F."/>
            <person name="Mewes H.-W."/>
            <person name="Miosga T."/>
            <person name="Moestl D."/>
            <person name="Mueller-Auer S."/>
            <person name="Nentwich U."/>
            <person name="Obermaier B."/>
            <person name="Piravandi E."/>
            <person name="Pohl T.M."/>
            <person name="Portetelle D."/>
            <person name="Purnelle B."/>
            <person name="Rechmann S."/>
            <person name="Rieger M."/>
            <person name="Rinke M."/>
            <person name="Rose M."/>
            <person name="Scharfe M."/>
            <person name="Scherens B."/>
            <person name="Scholler P."/>
            <person name="Schwager C."/>
            <person name="Schwarz S."/>
            <person name="Underwood A.P."/>
            <person name="Urrestarazu L.A."/>
            <person name="Vandenbol M."/>
            <person name="Verhasselt P."/>
            <person name="Vierendeels F."/>
            <person name="Voet M."/>
            <person name="Volckaert G."/>
            <person name="Voss H."/>
            <person name="Wambutt R."/>
            <person name="Wedler E."/>
            <person name="Wedler H."/>
            <person name="Zimmermann F.K."/>
            <person name="Zollner A."/>
            <person name="Hani J."/>
            <person name="Hoheisel J.D."/>
        </authorList>
    </citation>
    <scope>NUCLEOTIDE SEQUENCE [LARGE SCALE GENOMIC DNA]</scope>
    <source>
        <strain>ATCC 204508 / S288c</strain>
    </source>
</reference>
<reference key="2">
    <citation type="journal article" date="2014" name="G3 (Bethesda)">
        <title>The reference genome sequence of Saccharomyces cerevisiae: Then and now.</title>
        <authorList>
            <person name="Engel S.R."/>
            <person name="Dietrich F.S."/>
            <person name="Fisk D.G."/>
            <person name="Binkley G."/>
            <person name="Balakrishnan R."/>
            <person name="Costanzo M.C."/>
            <person name="Dwight S.S."/>
            <person name="Hitz B.C."/>
            <person name="Karra K."/>
            <person name="Nash R.S."/>
            <person name="Weng S."/>
            <person name="Wong E.D."/>
            <person name="Lloyd P."/>
            <person name="Skrzypek M.S."/>
            <person name="Miyasato S.R."/>
            <person name="Simison M."/>
            <person name="Cherry J.M."/>
        </authorList>
    </citation>
    <scope>GENOME REANNOTATION</scope>
    <source>
        <strain>ATCC 204508 / S288c</strain>
    </source>
</reference>
<reference key="3">
    <citation type="journal article" date="2007" name="Genome Res.">
        <title>Approaching a complete repository of sequence-verified protein-encoding clones for Saccharomyces cerevisiae.</title>
        <authorList>
            <person name="Hu Y."/>
            <person name="Rolfs A."/>
            <person name="Bhullar B."/>
            <person name="Murthy T.V.S."/>
            <person name="Zhu C."/>
            <person name="Berger M.F."/>
            <person name="Camargo A.A."/>
            <person name="Kelley F."/>
            <person name="McCarron S."/>
            <person name="Jepson D."/>
            <person name="Richardson A."/>
            <person name="Raphael J."/>
            <person name="Moreira D."/>
            <person name="Taycher E."/>
            <person name="Zuo D."/>
            <person name="Mohr S."/>
            <person name="Kane M.F."/>
            <person name="Williamson J."/>
            <person name="Simpson A.J.G."/>
            <person name="Bulyk M.L."/>
            <person name="Harlow E."/>
            <person name="Marsischky G."/>
            <person name="Kolodner R.D."/>
            <person name="LaBaer J."/>
        </authorList>
    </citation>
    <scope>NUCLEOTIDE SEQUENCE [GENOMIC DNA]</scope>
    <source>
        <strain>ATCC 204508 / S288c</strain>
    </source>
</reference>
<reference key="4">
    <citation type="journal article" date="2009" name="Science">
        <title>Global analysis of Cdk1 substrate phosphorylation sites provides insights into evolution.</title>
        <authorList>
            <person name="Holt L.J."/>
            <person name="Tuch B.B."/>
            <person name="Villen J."/>
            <person name="Johnson A.D."/>
            <person name="Gygi S.P."/>
            <person name="Morgan D.O."/>
        </authorList>
    </citation>
    <scope>PHOSPHORYLATION [LARGE SCALE ANALYSIS] AT THR-24 AND SER-27</scope>
    <scope>IDENTIFICATION BY MASS SPECTROMETRY [LARGE SCALE ANALYSIS]</scope>
</reference>
<accession>Q06247</accession>
<accession>D6VYH7</accession>
<sequence length="608" mass="69606">MHTNSPLRADNQDLETQPLLRPNTEESQLLNDEVRINVANETLIKSRWRSIKCLIIYLLGIVLLSFFGVSIVQYIRGHVPPTDVIEKNLVQVTNFKLVEFQLDGWKDNMGSDLNNDTGKYLQVSIHSQIWFDYDKWPGTENDSDARSQRDWIRYINEKVLKTICIDLNNVTTFDGDLVFKNKLGDVVGMEPICFNLAHRQINNLQFKILVKPSIWKIVKVLKKFWNRDFESLNIKSNLDMTIFKRKFGTRFNLLKLNDEILDWKDIIDWEKISATPLRMIQNMIDGISLQGFTLRDSSSDGFHADMRLNPITILGGVDWLHLPPGTSIPFINWEIKLPDCNGEPAIAIPTLSCFNEPINLHHDKDNIVVCLQNEIEGPLPDELLYQECPQNSLTPMSQIVNAVLNQNETVTFAARGHVLEDGIDNNSLIPADMLEDIFQEASFIPITTNATFNSSELIQEFQINDLQLRWAARKKLSLVGTFLGFFDLSFYETHQQDRVRIDTIRGQIDLYHNDINFLNLPMKQWINSSSHILHDEDTGNTQMKLQFDLENDDMEVVNSLELTRTLNEILFQGFTVIHFNATIDASLTTALGPWVLTGLAGEGDTLVT</sequence>
<evidence type="ECO:0000255" key="1"/>
<evidence type="ECO:0000256" key="2">
    <source>
        <dbReference type="SAM" id="MobiDB-lite"/>
    </source>
</evidence>
<evidence type="ECO:0000305" key="3"/>
<evidence type="ECO:0007744" key="4">
    <source>
    </source>
</evidence>
<organism>
    <name type="scientific">Saccharomyces cerevisiae (strain ATCC 204508 / S288c)</name>
    <name type="common">Baker's yeast</name>
    <dbReference type="NCBI Taxonomy" id="559292"/>
    <lineage>
        <taxon>Eukaryota</taxon>
        <taxon>Fungi</taxon>
        <taxon>Dikarya</taxon>
        <taxon>Ascomycota</taxon>
        <taxon>Saccharomycotina</taxon>
        <taxon>Saccharomycetes</taxon>
        <taxon>Saccharomycetales</taxon>
        <taxon>Saccharomycetaceae</taxon>
        <taxon>Saccharomyces</taxon>
    </lineage>
</organism>
<dbReference type="EMBL" id="U17246">
    <property type="protein sequence ID" value="AAB67465.1"/>
    <property type="molecule type" value="Genomic_DNA"/>
</dbReference>
<dbReference type="EMBL" id="AY692703">
    <property type="protein sequence ID" value="AAT92722.1"/>
    <property type="molecule type" value="Genomic_DNA"/>
</dbReference>
<dbReference type="EMBL" id="BK006945">
    <property type="protein sequence ID" value="DAA09493.1"/>
    <property type="molecule type" value="Genomic_DNA"/>
</dbReference>
<dbReference type="PIR" id="S51418">
    <property type="entry name" value="S51418"/>
</dbReference>
<dbReference type="BioGRID" id="31444">
    <property type="interactions" value="70"/>
</dbReference>
<dbReference type="DIP" id="DIP-4805N"/>
<dbReference type="FunCoup" id="Q06247">
    <property type="interactions" value="33"/>
</dbReference>
<dbReference type="IntAct" id="Q06247">
    <property type="interactions" value="2"/>
</dbReference>
<dbReference type="STRING" id="4932.YLR173W"/>
<dbReference type="GlyGen" id="Q06247">
    <property type="glycosylation" value="9 sites"/>
</dbReference>
<dbReference type="iPTMnet" id="Q06247"/>
<dbReference type="PaxDb" id="4932-YLR173W"/>
<dbReference type="PeptideAtlas" id="Q06247"/>
<dbReference type="EnsemblFungi" id="YLR173W_mRNA">
    <property type="protein sequence ID" value="YLR173W"/>
    <property type="gene ID" value="YLR173W"/>
</dbReference>
<dbReference type="KEGG" id="sce:YLR173W"/>
<dbReference type="AGR" id="SGD:S000004163"/>
<dbReference type="SGD" id="S000004163">
    <property type="gene designation" value="YLR173W"/>
</dbReference>
<dbReference type="VEuPathDB" id="FungiDB:YLR173W"/>
<dbReference type="eggNOG" id="ENOG502R0JC">
    <property type="taxonomic scope" value="Eukaryota"/>
</dbReference>
<dbReference type="HOGENOM" id="CLU_035072_0_0_1"/>
<dbReference type="InParanoid" id="Q06247"/>
<dbReference type="OMA" id="DWIRYIN"/>
<dbReference type="OrthoDB" id="5596576at2759"/>
<dbReference type="BioCyc" id="YEAST:G3O-32300-MONOMER"/>
<dbReference type="BioGRID-ORCS" id="850870">
    <property type="hits" value="0 hits in 10 CRISPR screens"/>
</dbReference>
<dbReference type="PRO" id="PR:Q06247"/>
<dbReference type="Proteomes" id="UP000002311">
    <property type="component" value="Chromosome XII"/>
</dbReference>
<dbReference type="RNAct" id="Q06247">
    <property type="molecule type" value="protein"/>
</dbReference>
<dbReference type="GO" id="GO:0000329">
    <property type="term" value="C:fungal-type vacuole membrane"/>
    <property type="evidence" value="ECO:0000314"/>
    <property type="project" value="SGD"/>
</dbReference>
<dbReference type="GO" id="GO:0016020">
    <property type="term" value="C:membrane"/>
    <property type="evidence" value="ECO:0000318"/>
    <property type="project" value="GO_Central"/>
</dbReference>
<dbReference type="GO" id="GO:0006995">
    <property type="term" value="P:cellular response to nitrogen starvation"/>
    <property type="evidence" value="ECO:0000315"/>
    <property type="project" value="SGD"/>
</dbReference>
<dbReference type="GO" id="GO:0016242">
    <property type="term" value="P:negative regulation of macroautophagy"/>
    <property type="evidence" value="ECO:0000315"/>
    <property type="project" value="SGD"/>
</dbReference>
<dbReference type="GO" id="GO:0034497">
    <property type="term" value="P:protein localization to phagophore assembly site"/>
    <property type="evidence" value="ECO:0000315"/>
    <property type="project" value="SGD"/>
</dbReference>
<dbReference type="InterPro" id="IPR046368">
    <property type="entry name" value="Tag1"/>
</dbReference>
<dbReference type="InterPro" id="IPR055011">
    <property type="entry name" value="Tag1_C"/>
</dbReference>
<dbReference type="InterPro" id="IPR055010">
    <property type="entry name" value="Tag1_M"/>
</dbReference>
<dbReference type="InterPro" id="IPR055012">
    <property type="entry name" value="Tag1_N"/>
</dbReference>
<dbReference type="PANTHER" id="PTHR35895">
    <property type="entry name" value="CHROMOSOME 16, WHOLE GENOME SHOTGUN SEQUENCE"/>
    <property type="match status" value="1"/>
</dbReference>
<dbReference type="PANTHER" id="PTHR35895:SF3">
    <property type="entry name" value="PRE-RRNA PROCESSING PROTEIN"/>
    <property type="match status" value="1"/>
</dbReference>
<dbReference type="Pfam" id="PF22786">
    <property type="entry name" value="Tag1_C"/>
    <property type="match status" value="1"/>
</dbReference>
<dbReference type="Pfam" id="PF22787">
    <property type="entry name" value="Tag1_M"/>
    <property type="match status" value="1"/>
</dbReference>
<dbReference type="Pfam" id="PF20775">
    <property type="entry name" value="Tag1_N"/>
    <property type="match status" value="1"/>
</dbReference>
<proteinExistence type="evidence at protein level"/>
<keyword id="KW-0325">Glycoprotein</keyword>
<keyword id="KW-0472">Membrane</keyword>
<keyword id="KW-0597">Phosphoprotein</keyword>
<keyword id="KW-1185">Reference proteome</keyword>
<keyword id="KW-0812">Transmembrane</keyword>
<keyword id="KW-1133">Transmembrane helix</keyword>
<protein>
    <recommendedName>
        <fullName>Putative uncharacterized protein YLR173W</fullName>
    </recommendedName>
</protein>